<evidence type="ECO:0000250" key="1">
    <source>
        <dbReference type="UniProtKB" id="O84395"/>
    </source>
</evidence>
<evidence type="ECO:0000269" key="2">
    <source>
    </source>
</evidence>
<evidence type="ECO:0000303" key="3">
    <source>
    </source>
</evidence>
<evidence type="ECO:0000305" key="4"/>
<evidence type="ECO:0000305" key="5">
    <source>
    </source>
</evidence>
<reference key="1">
    <citation type="journal article" date="2014" name="Appl. Environ. Microbiol.">
        <title>Biosynthesis of the beta-methylarginine residue of peptidyl nucleoside arginomycin in Streptomyces arginensis NRRL 15941.</title>
        <authorList>
            <person name="Feng J."/>
            <person name="Wu J."/>
            <person name="Gao J."/>
            <person name="Xia Z."/>
            <person name="Deng Z."/>
            <person name="He X."/>
        </authorList>
    </citation>
    <scope>NUCLEOTIDE SEQUENCE [GENOMIC DNA]</scope>
    <scope>FUNCTION</scope>
    <scope>CATALYTIC ACTIVITY</scope>
    <scope>COFACTOR</scope>
    <scope>PATHWAY</scope>
    <source>
        <strain>NRRL 15941</strain>
    </source>
</reference>
<dbReference type="EC" id="2.6.1.125" evidence="2"/>
<dbReference type="EC" id="2.6.1.126" evidence="2"/>
<dbReference type="EMBL" id="KC181124">
    <property type="protein sequence ID" value="AGG35703.1"/>
    <property type="molecule type" value="Genomic_DNA"/>
</dbReference>
<dbReference type="SMR" id="M1T1K4"/>
<dbReference type="KEGG" id="ag:AGG35703"/>
<dbReference type="BioCyc" id="MetaCyc:MONOMER-18912"/>
<dbReference type="GO" id="GO:0030170">
    <property type="term" value="F:pyridoxal phosphate binding"/>
    <property type="evidence" value="ECO:0007669"/>
    <property type="project" value="InterPro"/>
</dbReference>
<dbReference type="GO" id="GO:0008483">
    <property type="term" value="F:transaminase activity"/>
    <property type="evidence" value="ECO:0007669"/>
    <property type="project" value="UniProtKB-KW"/>
</dbReference>
<dbReference type="GO" id="GO:0006520">
    <property type="term" value="P:amino acid metabolic process"/>
    <property type="evidence" value="ECO:0007669"/>
    <property type="project" value="InterPro"/>
</dbReference>
<dbReference type="GO" id="GO:0009058">
    <property type="term" value="P:biosynthetic process"/>
    <property type="evidence" value="ECO:0007669"/>
    <property type="project" value="InterPro"/>
</dbReference>
<dbReference type="CDD" id="cd00609">
    <property type="entry name" value="AAT_like"/>
    <property type="match status" value="1"/>
</dbReference>
<dbReference type="Gene3D" id="3.40.640.10">
    <property type="entry name" value="Type I PLP-dependent aspartate aminotransferase-like (Major domain)"/>
    <property type="match status" value="1"/>
</dbReference>
<dbReference type="InterPro" id="IPR030898">
    <property type="entry name" value="3metArgNH2trans"/>
</dbReference>
<dbReference type="InterPro" id="IPR004839">
    <property type="entry name" value="Aminotransferase_I/II_large"/>
</dbReference>
<dbReference type="InterPro" id="IPR050596">
    <property type="entry name" value="AspAT/PAT-like"/>
</dbReference>
<dbReference type="InterPro" id="IPR004838">
    <property type="entry name" value="NHTrfase_class1_PyrdxlP-BS"/>
</dbReference>
<dbReference type="InterPro" id="IPR015424">
    <property type="entry name" value="PyrdxlP-dep_Trfase"/>
</dbReference>
<dbReference type="InterPro" id="IPR015421">
    <property type="entry name" value="PyrdxlP-dep_Trfase_major"/>
</dbReference>
<dbReference type="NCBIfam" id="TIGR04544">
    <property type="entry name" value="3metArgNH2trans"/>
    <property type="match status" value="1"/>
</dbReference>
<dbReference type="PANTHER" id="PTHR46383">
    <property type="entry name" value="ASPARTATE AMINOTRANSFERASE"/>
    <property type="match status" value="1"/>
</dbReference>
<dbReference type="PANTHER" id="PTHR46383:SF1">
    <property type="entry name" value="ASPARTATE AMINOTRANSFERASE"/>
    <property type="match status" value="1"/>
</dbReference>
<dbReference type="Pfam" id="PF00155">
    <property type="entry name" value="Aminotran_1_2"/>
    <property type="match status" value="1"/>
</dbReference>
<dbReference type="SUPFAM" id="SSF53383">
    <property type="entry name" value="PLP-dependent transferases"/>
    <property type="match status" value="1"/>
</dbReference>
<dbReference type="PROSITE" id="PS00105">
    <property type="entry name" value="AA_TRANSFER_CLASS_1"/>
    <property type="match status" value="1"/>
</dbReference>
<accession>M1T1K4</accession>
<feature type="chain" id="PRO_0000460724" description="3-methylarginine biosynthesis aminotransferase ArgM">
    <location>
        <begin position="1"/>
        <end position="369"/>
    </location>
</feature>
<feature type="modified residue" description="N6-(pyridoxal phosphate)lysine" evidence="1">
    <location>
        <position position="216"/>
    </location>
</feature>
<name>ARGM_STREL</name>
<keyword id="KW-0032">Aminotransferase</keyword>
<keyword id="KW-0663">Pyridoxal phosphate</keyword>
<keyword id="KW-0808">Transferase</keyword>
<proteinExistence type="evidence at protein level"/>
<organism>
    <name type="scientific">Streptomyces arginensis</name>
    <dbReference type="NCBI Taxonomy" id="1295550"/>
    <lineage>
        <taxon>Bacteria</taxon>
        <taxon>Bacillati</taxon>
        <taxon>Actinomycetota</taxon>
        <taxon>Actinomycetes</taxon>
        <taxon>Kitasatosporales</taxon>
        <taxon>Streptomycetaceae</taxon>
        <taxon>Streptomyces</taxon>
    </lineage>
</organism>
<gene>
    <name evidence="3" type="primary">argM</name>
</gene>
<comment type="function">
    <text evidence="2">Aminotransferase involved in the formation of the rare amino acid 3-methylarginine (MeArg), which is incorporated into the peptidyl nucleoside antibiotic arginomycin (PubMed:24907335). Catalyzes two rounds of transamination: the transfer of the amino group from L-arginine to 2-oxoglutarate to give glutamate and 5-guanidino-2-oxopentanoic acid, which will be methylated by ArgN (PubMed:24907335). Then, ArgM specifically catalyzes transamination from the donor L-aspartate to the 5-guanidino-3-methyl-2-oxopentanoic acid produced by ArgN, generating the final product, 3-methylarginine (PubMed:24907335). Cannot use arginine analogs, such as D-arginine, L-homoarginine and N-methylarginine for the first transamination (PubMed:24907335).</text>
</comment>
<comment type="catalytic activity">
    <reaction evidence="2">
        <text>L-arginine + 2-oxoglutarate = 5-guanidino-2-oxopentanoate + L-glutamate</text>
        <dbReference type="Rhea" id="RHEA:78819"/>
        <dbReference type="ChEBI" id="CHEBI:16810"/>
        <dbReference type="ChEBI" id="CHEBI:29985"/>
        <dbReference type="ChEBI" id="CHEBI:32682"/>
        <dbReference type="ChEBI" id="CHEBI:58489"/>
        <dbReference type="EC" id="2.6.1.125"/>
    </reaction>
    <physiologicalReaction direction="left-to-right" evidence="2">
        <dbReference type="Rhea" id="RHEA:78820"/>
    </physiologicalReaction>
</comment>
<comment type="catalytic activity">
    <reaction evidence="2">
        <text>(3R)-5-guanidino-3-methyl-2-oxopentanoate + L-aspartate = (3R)-3-methyl-L-arginine + oxaloacetate</text>
        <dbReference type="Rhea" id="RHEA:78823"/>
        <dbReference type="ChEBI" id="CHEBI:16452"/>
        <dbReference type="ChEBI" id="CHEBI:29991"/>
        <dbReference type="ChEBI" id="CHEBI:229580"/>
        <dbReference type="ChEBI" id="CHEBI:229593"/>
        <dbReference type="EC" id="2.6.1.126"/>
    </reaction>
    <physiologicalReaction direction="left-to-right" evidence="2">
        <dbReference type="Rhea" id="RHEA:78824"/>
    </physiologicalReaction>
</comment>
<comment type="cofactor">
    <cofactor evidence="2">
        <name>pyridoxal 5'-phosphate</name>
        <dbReference type="ChEBI" id="CHEBI:597326"/>
    </cofactor>
</comment>
<comment type="pathway">
    <text evidence="5">Antibiotic biosynthesis.</text>
</comment>
<comment type="similarity">
    <text evidence="4">Belongs to the class-I pyridoxal-phosphate-dependent aminotransferase family.</text>
</comment>
<protein>
    <recommendedName>
        <fullName evidence="4">3-methylarginine biosynthesis aminotransferase ArgM</fullName>
        <ecNumber evidence="2">2.6.1.125</ecNumber>
        <ecNumber evidence="2">2.6.1.126</ecNumber>
    </recommendedName>
    <alternativeName>
        <fullName evidence="4">Arginine-alpha-ketoglutarate transaminase</fullName>
    </alternativeName>
    <alternativeName>
        <fullName evidence="4">L-arginine:2-oxoglutarate transaminase</fullName>
    </alternativeName>
    <alternativeName>
        <fullName evidence="4">L-aspartate:5-guanidino-3-methyl-2-oxopentanoate transaminase</fullName>
    </alternativeName>
</protein>
<sequence length="369" mass="39878">MSLTPLGQRLAEVAASPEEPWEILAENVPVWPEPPRLQAVGSWDLDAQYAPSQGTEELLEALRLRQREQGIDVGAESLLVTNGAFDGLGLIARHLTGKGVRRAVCAGPVLLSVADLLRDLGLDVQVPDWPELVGGRSWSALGPGDLLYLNSPHNPTGACLDEATARDLFAAQRRLGFALVLDLVYDAFVHDPAALAAPPALVEDWRGVYGLNSFSKNYGAPGLRVGWITADPQEVDRLTARMEWERIAVSTRAQSQAAQLCKLGNQPLTERVRAGHRLVLDWARANGMRVSPPQGGTHVWVEAGVPDTEALADALMAEHRLVVTTSAHYHPASSRHIRVPTGVEPAFLTRSLEAVSAVSERLRRSATVG</sequence>